<proteinExistence type="inferred from homology"/>
<protein>
    <recommendedName>
        <fullName>Dihydroneopterin triphosphate 2'-epimerase</fullName>
        <ecNumber evidence="1">5.1.99.7</ecNumber>
    </recommendedName>
    <alternativeName>
        <fullName>D-erythro-7,8-dihydroneopterin triphosphate epimerase</fullName>
    </alternativeName>
</protein>
<reference key="1">
    <citation type="journal article" date="2002" name="Nucleic Acids Res.">
        <title>Genome sequence of Shigella flexneri 2a: insights into pathogenicity through comparison with genomes of Escherichia coli K12 and O157.</title>
        <authorList>
            <person name="Jin Q."/>
            <person name="Yuan Z."/>
            <person name="Xu J."/>
            <person name="Wang Y."/>
            <person name="Shen Y."/>
            <person name="Lu W."/>
            <person name="Wang J."/>
            <person name="Liu H."/>
            <person name="Yang J."/>
            <person name="Yang F."/>
            <person name="Zhang X."/>
            <person name="Zhang J."/>
            <person name="Yang G."/>
            <person name="Wu H."/>
            <person name="Qu D."/>
            <person name="Dong J."/>
            <person name="Sun L."/>
            <person name="Xue Y."/>
            <person name="Zhao A."/>
            <person name="Gao Y."/>
            <person name="Zhu J."/>
            <person name="Kan B."/>
            <person name="Ding K."/>
            <person name="Chen S."/>
            <person name="Cheng H."/>
            <person name="Yao Z."/>
            <person name="He B."/>
            <person name="Chen R."/>
            <person name="Ma D."/>
            <person name="Qiang B."/>
            <person name="Wen Y."/>
            <person name="Hou Y."/>
            <person name="Yu J."/>
        </authorList>
    </citation>
    <scope>NUCLEOTIDE SEQUENCE [LARGE SCALE GENOMIC DNA]</scope>
    <source>
        <strain>301 / Serotype 2a</strain>
    </source>
</reference>
<reference key="2">
    <citation type="journal article" date="2003" name="Infect. Immun.">
        <title>Complete genome sequence and comparative genomics of Shigella flexneri serotype 2a strain 2457T.</title>
        <authorList>
            <person name="Wei J."/>
            <person name="Goldberg M.B."/>
            <person name="Burland V."/>
            <person name="Venkatesan M.M."/>
            <person name="Deng W."/>
            <person name="Fournier G."/>
            <person name="Mayhew G.F."/>
            <person name="Plunkett G. III"/>
            <person name="Rose D.J."/>
            <person name="Darling A."/>
            <person name="Mau B."/>
            <person name="Perna N.T."/>
            <person name="Payne S.M."/>
            <person name="Runyen-Janecky L.J."/>
            <person name="Zhou S."/>
            <person name="Schwartz D.C."/>
            <person name="Blattner F.R."/>
        </authorList>
    </citation>
    <scope>NUCLEOTIDE SEQUENCE [LARGE SCALE GENOMIC DNA]</scope>
    <source>
        <strain>ATCC 700930 / 2457T / Serotype 2a</strain>
    </source>
</reference>
<feature type="initiator methionine" description="Removed" evidence="1">
    <location>
        <position position="1"/>
    </location>
</feature>
<feature type="chain" id="PRO_0000168298" description="Dihydroneopterin triphosphate 2'-epimerase">
    <location>
        <begin position="2"/>
        <end position="120"/>
    </location>
</feature>
<gene>
    <name type="primary">folX</name>
    <name type="ordered locus">SF2379</name>
    <name type="ordered locus">S2514</name>
</gene>
<dbReference type="EC" id="5.1.99.7" evidence="1"/>
<dbReference type="EMBL" id="AE005674">
    <property type="protein sequence ID" value="AAN43892.1"/>
    <property type="molecule type" value="Genomic_DNA"/>
</dbReference>
<dbReference type="EMBL" id="AE014073">
    <property type="protein sequence ID" value="AAP17710.1"/>
    <property type="molecule type" value="Genomic_DNA"/>
</dbReference>
<dbReference type="RefSeq" id="NP_708185.1">
    <property type="nucleotide sequence ID" value="NC_004337.2"/>
</dbReference>
<dbReference type="RefSeq" id="WP_000068457.1">
    <property type="nucleotide sequence ID" value="NZ_WPGW01000016.1"/>
</dbReference>
<dbReference type="SMR" id="P0AC22"/>
<dbReference type="STRING" id="198214.SF2379"/>
<dbReference type="PaxDb" id="198214-SF2379"/>
<dbReference type="GeneID" id="1027228"/>
<dbReference type="GeneID" id="93774871"/>
<dbReference type="KEGG" id="sfl:SF2379"/>
<dbReference type="KEGG" id="sfx:S2514"/>
<dbReference type="PATRIC" id="fig|198214.7.peg.2846"/>
<dbReference type="HOGENOM" id="CLU_112632_0_0_6"/>
<dbReference type="Proteomes" id="UP000001006">
    <property type="component" value="Chromosome"/>
</dbReference>
<dbReference type="Proteomes" id="UP000002673">
    <property type="component" value="Chromosome"/>
</dbReference>
<dbReference type="GO" id="GO:0005829">
    <property type="term" value="C:cytosol"/>
    <property type="evidence" value="ECO:0007669"/>
    <property type="project" value="TreeGrafter"/>
</dbReference>
<dbReference type="GO" id="GO:0004150">
    <property type="term" value="F:dihydroneopterin aldolase activity"/>
    <property type="evidence" value="ECO:0007669"/>
    <property type="project" value="InterPro"/>
</dbReference>
<dbReference type="GO" id="GO:0008719">
    <property type="term" value="F:dihydroneopterin triphosphate 2'-epimerase activity"/>
    <property type="evidence" value="ECO:0007669"/>
    <property type="project" value="UniProtKB-EC"/>
</dbReference>
<dbReference type="GO" id="GO:0006760">
    <property type="term" value="P:folic acid-containing compound metabolic process"/>
    <property type="evidence" value="ECO:0007669"/>
    <property type="project" value="InterPro"/>
</dbReference>
<dbReference type="CDD" id="cd00534">
    <property type="entry name" value="DHNA_DHNTPE"/>
    <property type="match status" value="1"/>
</dbReference>
<dbReference type="FunFam" id="3.30.1130.10:FF:000005">
    <property type="entry name" value="D-erythro-7,8-dihydroneopterin triphosphate epimerase"/>
    <property type="match status" value="1"/>
</dbReference>
<dbReference type="Gene3D" id="3.30.1130.10">
    <property type="match status" value="1"/>
</dbReference>
<dbReference type="InterPro" id="IPR006156">
    <property type="entry name" value="Dihydroneopterin_aldolase"/>
</dbReference>
<dbReference type="InterPro" id="IPR006157">
    <property type="entry name" value="FolB_dom"/>
</dbReference>
<dbReference type="InterPro" id="IPR043133">
    <property type="entry name" value="GTP-CH-I_C/QueF"/>
</dbReference>
<dbReference type="NCBIfam" id="TIGR00526">
    <property type="entry name" value="folB_dom"/>
    <property type="match status" value="1"/>
</dbReference>
<dbReference type="NCBIfam" id="NF008418">
    <property type="entry name" value="PRK11245.1"/>
    <property type="match status" value="1"/>
</dbReference>
<dbReference type="PANTHER" id="PTHR42844">
    <property type="entry name" value="DIHYDRONEOPTERIN ALDOLASE 1-RELATED"/>
    <property type="match status" value="1"/>
</dbReference>
<dbReference type="PANTHER" id="PTHR42844:SF10">
    <property type="entry name" value="DIHYDRONEOPTERIN TRIPHOSPHATE 2'-EPIMERASE"/>
    <property type="match status" value="1"/>
</dbReference>
<dbReference type="Pfam" id="PF02152">
    <property type="entry name" value="FolB"/>
    <property type="match status" value="1"/>
</dbReference>
<dbReference type="SMART" id="SM00905">
    <property type="entry name" value="FolB"/>
    <property type="match status" value="1"/>
</dbReference>
<dbReference type="SUPFAM" id="SSF55620">
    <property type="entry name" value="Tetrahydrobiopterin biosynthesis enzymes-like"/>
    <property type="match status" value="1"/>
</dbReference>
<evidence type="ECO:0000250" key="1">
    <source>
        <dbReference type="UniProtKB" id="P0AC19"/>
    </source>
</evidence>
<evidence type="ECO:0000305" key="2"/>
<sequence>MAQPAAIIRIKNLRLRTFIGIKEEEINNRQDIVINVTIHYPADKARTSEDINDALNYRTVTKNIIQHVENNRFSLLEKLTQDVLDIAREHHWVTYAEVEIDKLHALRYADSVSMTLSWQR</sequence>
<name>FOLX_SHIFL</name>
<keyword id="KW-0413">Isomerase</keyword>
<keyword id="KW-1185">Reference proteome</keyword>
<comment type="function">
    <text evidence="1">Catalyzes the epimerization of carbon 2' of the side chain of 7,8-dihydroneopterin triphosphate (H2NTP) to form 7,8-dihydromonapterin triphosphate (H2MTP). Is required for tetrahydromonapterin biosynthesis.</text>
</comment>
<comment type="catalytic activity">
    <reaction evidence="1">
        <text>7,8-dihydroneopterin 3'-triphosphate = 7,8-dihydromonapterin 3'-triphosphate</text>
        <dbReference type="Rhea" id="RHEA:28346"/>
        <dbReference type="ChEBI" id="CHEBI:58462"/>
        <dbReference type="ChEBI" id="CHEBI:61186"/>
        <dbReference type="EC" id="5.1.99.7"/>
    </reaction>
</comment>
<comment type="subunit">
    <text evidence="1">Homooctamer.</text>
</comment>
<comment type="similarity">
    <text evidence="2">Belongs to the DHNA family.</text>
</comment>
<organism>
    <name type="scientific">Shigella flexneri</name>
    <dbReference type="NCBI Taxonomy" id="623"/>
    <lineage>
        <taxon>Bacteria</taxon>
        <taxon>Pseudomonadati</taxon>
        <taxon>Pseudomonadota</taxon>
        <taxon>Gammaproteobacteria</taxon>
        <taxon>Enterobacterales</taxon>
        <taxon>Enterobacteriaceae</taxon>
        <taxon>Shigella</taxon>
    </lineage>
</organism>
<accession>P0AC22</accession>
<accession>P77796</accession>
<accession>P80449</accession>